<feature type="chain" id="PRO_0000117125" description="tRNA uridine 5-carboxymethylaminomethyl modification enzyme MnmG">
    <location>
        <begin position="1"/>
        <end position="629"/>
    </location>
</feature>
<feature type="region of interest" description="Disordered" evidence="2">
    <location>
        <begin position="203"/>
        <end position="226"/>
    </location>
</feature>
<feature type="compositionally biased region" description="Basic and acidic residues" evidence="2">
    <location>
        <begin position="215"/>
        <end position="226"/>
    </location>
</feature>
<feature type="binding site" evidence="1">
    <location>
        <begin position="15"/>
        <end position="20"/>
    </location>
    <ligand>
        <name>FAD</name>
        <dbReference type="ChEBI" id="CHEBI:57692"/>
    </ligand>
</feature>
<feature type="binding site" evidence="1">
    <location>
        <position position="127"/>
    </location>
    <ligand>
        <name>FAD</name>
        <dbReference type="ChEBI" id="CHEBI:57692"/>
    </ligand>
</feature>
<feature type="binding site" evidence="1">
    <location>
        <position position="182"/>
    </location>
    <ligand>
        <name>FAD</name>
        <dbReference type="ChEBI" id="CHEBI:57692"/>
    </ligand>
</feature>
<feature type="binding site" evidence="1">
    <location>
        <begin position="274"/>
        <end position="288"/>
    </location>
    <ligand>
        <name>NAD(+)</name>
        <dbReference type="ChEBI" id="CHEBI:57540"/>
    </ligand>
</feature>
<feature type="binding site" evidence="1">
    <location>
        <position position="371"/>
    </location>
    <ligand>
        <name>FAD</name>
        <dbReference type="ChEBI" id="CHEBI:57692"/>
    </ligand>
</feature>
<proteinExistence type="inferred from homology"/>
<name>MNMG_LISIN</name>
<gene>
    <name evidence="1" type="primary">mnmG</name>
    <name evidence="1" type="synonym">gidA</name>
    <name type="ordered locus">lin2942</name>
</gene>
<sequence>MQTYDAGTFDVIVVGAGHAGVEAGLASGRMGAKTLMLTINLDMVAFMPCNPSVGGPAKGVVVREIDALGGEMGRNTDKTYIQMRMLNTGKGPAVRALRAQADKWDYQHEMKHTIEKEENITLRQGLVDRLVIEDGVCKGVITNSGAIYYAKTVVITTGTFSRGEIIVGELRYSSGPNNQQPSVKLSEHLEELGFELRRFKTGTPPRVKSSTIDYSKTEEQPGDDHPRAFSFDTVEMMLEQLPCWLTYTNETTHEIIQANLHRSPMFTATKKGTGARYCPSIEDKIVRFSDKPRHQIFLEPEGKNTEEVYVQGLSTSLPEEVQREMLRTIPGLENVEMMRVGYAIEYDAVMPDQLWPSLETKLVEGLFTAGQINGTSGYEEAAGQGLMAGINAARKVFEKEPVILGRDQAYIGVLIDDLVTKGTEEPYRLLTSRAEYRLLLRHDNADLRLTEIGHEIGLISDERYERFLAKQRAIEAEKERLQKTRIKPTAEVQAMLKEIGSGELKDGILAADLLRRPEITYDKIAQIVSRETFVTDEIAEQVEIQIKYEGYIQKSNLQVEKMKRMEDKKIPENIDYDAISGLATEALEKLKKIEPLSIAQASRISGVNPADISILLVYIEQGKIAKVSK</sequence>
<organism>
    <name type="scientific">Listeria innocua serovar 6a (strain ATCC BAA-680 / CLIP 11262)</name>
    <dbReference type="NCBI Taxonomy" id="272626"/>
    <lineage>
        <taxon>Bacteria</taxon>
        <taxon>Bacillati</taxon>
        <taxon>Bacillota</taxon>
        <taxon>Bacilli</taxon>
        <taxon>Bacillales</taxon>
        <taxon>Listeriaceae</taxon>
        <taxon>Listeria</taxon>
    </lineage>
</organism>
<keyword id="KW-0963">Cytoplasm</keyword>
<keyword id="KW-0274">FAD</keyword>
<keyword id="KW-0285">Flavoprotein</keyword>
<keyword id="KW-0520">NAD</keyword>
<keyword id="KW-0819">tRNA processing</keyword>
<protein>
    <recommendedName>
        <fullName evidence="1">tRNA uridine 5-carboxymethylaminomethyl modification enzyme MnmG</fullName>
    </recommendedName>
    <alternativeName>
        <fullName evidence="1">Glucose-inhibited division protein A</fullName>
    </alternativeName>
</protein>
<evidence type="ECO:0000255" key="1">
    <source>
        <dbReference type="HAMAP-Rule" id="MF_00129"/>
    </source>
</evidence>
<evidence type="ECO:0000256" key="2">
    <source>
        <dbReference type="SAM" id="MobiDB-lite"/>
    </source>
</evidence>
<dbReference type="EMBL" id="AL596174">
    <property type="protein sequence ID" value="CAC98167.1"/>
    <property type="molecule type" value="Genomic_DNA"/>
</dbReference>
<dbReference type="PIR" id="AG1799">
    <property type="entry name" value="AG1799"/>
</dbReference>
<dbReference type="RefSeq" id="WP_010991465.1">
    <property type="nucleotide sequence ID" value="NC_003212.1"/>
</dbReference>
<dbReference type="SMR" id="Q926U8"/>
<dbReference type="STRING" id="272626.gene:17567328"/>
<dbReference type="GeneID" id="93236219"/>
<dbReference type="KEGG" id="lin:gidA"/>
<dbReference type="eggNOG" id="COG0445">
    <property type="taxonomic scope" value="Bacteria"/>
</dbReference>
<dbReference type="HOGENOM" id="CLU_007831_2_2_9"/>
<dbReference type="OrthoDB" id="9815560at2"/>
<dbReference type="Proteomes" id="UP000002513">
    <property type="component" value="Chromosome"/>
</dbReference>
<dbReference type="GO" id="GO:0005829">
    <property type="term" value="C:cytosol"/>
    <property type="evidence" value="ECO:0007669"/>
    <property type="project" value="TreeGrafter"/>
</dbReference>
<dbReference type="GO" id="GO:0050660">
    <property type="term" value="F:flavin adenine dinucleotide binding"/>
    <property type="evidence" value="ECO:0007669"/>
    <property type="project" value="UniProtKB-UniRule"/>
</dbReference>
<dbReference type="GO" id="GO:0030488">
    <property type="term" value="P:tRNA methylation"/>
    <property type="evidence" value="ECO:0007669"/>
    <property type="project" value="TreeGrafter"/>
</dbReference>
<dbReference type="GO" id="GO:0002098">
    <property type="term" value="P:tRNA wobble uridine modification"/>
    <property type="evidence" value="ECO:0007669"/>
    <property type="project" value="InterPro"/>
</dbReference>
<dbReference type="FunFam" id="1.10.10.1800:FF:000001">
    <property type="entry name" value="tRNA uridine 5-carboxymethylaminomethyl modification enzyme MnmG"/>
    <property type="match status" value="1"/>
</dbReference>
<dbReference type="FunFam" id="1.10.150.570:FF:000001">
    <property type="entry name" value="tRNA uridine 5-carboxymethylaminomethyl modification enzyme MnmG"/>
    <property type="match status" value="1"/>
</dbReference>
<dbReference type="FunFam" id="3.50.50.60:FF:000002">
    <property type="entry name" value="tRNA uridine 5-carboxymethylaminomethyl modification enzyme MnmG"/>
    <property type="match status" value="1"/>
</dbReference>
<dbReference type="FunFam" id="3.50.50.60:FF:000063">
    <property type="entry name" value="tRNA uridine 5-carboxymethylaminomethyl modification enzyme MnmG"/>
    <property type="match status" value="1"/>
</dbReference>
<dbReference type="Gene3D" id="3.50.50.60">
    <property type="entry name" value="FAD/NAD(P)-binding domain"/>
    <property type="match status" value="2"/>
</dbReference>
<dbReference type="Gene3D" id="1.10.150.570">
    <property type="entry name" value="GidA associated domain, C-terminal subdomain"/>
    <property type="match status" value="1"/>
</dbReference>
<dbReference type="Gene3D" id="1.10.10.1800">
    <property type="entry name" value="tRNA uridine 5-carboxymethylaminomethyl modification enzyme MnmG/GidA"/>
    <property type="match status" value="1"/>
</dbReference>
<dbReference type="HAMAP" id="MF_00129">
    <property type="entry name" value="MnmG_GidA"/>
    <property type="match status" value="1"/>
</dbReference>
<dbReference type="InterPro" id="IPR036188">
    <property type="entry name" value="FAD/NAD-bd_sf"/>
</dbReference>
<dbReference type="InterPro" id="IPR049312">
    <property type="entry name" value="GIDA_C_N"/>
</dbReference>
<dbReference type="InterPro" id="IPR004416">
    <property type="entry name" value="MnmG"/>
</dbReference>
<dbReference type="InterPro" id="IPR002218">
    <property type="entry name" value="MnmG-rel"/>
</dbReference>
<dbReference type="InterPro" id="IPR020595">
    <property type="entry name" value="MnmG-rel_CS"/>
</dbReference>
<dbReference type="InterPro" id="IPR026904">
    <property type="entry name" value="MnmG_C"/>
</dbReference>
<dbReference type="InterPro" id="IPR047001">
    <property type="entry name" value="MnmG_C_subdom"/>
</dbReference>
<dbReference type="InterPro" id="IPR044920">
    <property type="entry name" value="MnmG_C_subdom_sf"/>
</dbReference>
<dbReference type="InterPro" id="IPR040131">
    <property type="entry name" value="MnmG_N"/>
</dbReference>
<dbReference type="NCBIfam" id="TIGR00136">
    <property type="entry name" value="mnmG_gidA"/>
    <property type="match status" value="1"/>
</dbReference>
<dbReference type="PANTHER" id="PTHR11806">
    <property type="entry name" value="GLUCOSE INHIBITED DIVISION PROTEIN A"/>
    <property type="match status" value="1"/>
</dbReference>
<dbReference type="PANTHER" id="PTHR11806:SF0">
    <property type="entry name" value="PROTEIN MTO1 HOMOLOG, MITOCHONDRIAL"/>
    <property type="match status" value="1"/>
</dbReference>
<dbReference type="Pfam" id="PF01134">
    <property type="entry name" value="GIDA"/>
    <property type="match status" value="1"/>
</dbReference>
<dbReference type="Pfam" id="PF21680">
    <property type="entry name" value="GIDA_C_1st"/>
    <property type="match status" value="1"/>
</dbReference>
<dbReference type="Pfam" id="PF13932">
    <property type="entry name" value="SAM_GIDA_C"/>
    <property type="match status" value="1"/>
</dbReference>
<dbReference type="PRINTS" id="PR00411">
    <property type="entry name" value="PNDRDTASEI"/>
</dbReference>
<dbReference type="SMART" id="SM01228">
    <property type="entry name" value="GIDA_assoc_3"/>
    <property type="match status" value="1"/>
</dbReference>
<dbReference type="SUPFAM" id="SSF51905">
    <property type="entry name" value="FAD/NAD(P)-binding domain"/>
    <property type="match status" value="1"/>
</dbReference>
<dbReference type="PROSITE" id="PS01280">
    <property type="entry name" value="GIDA_1"/>
    <property type="match status" value="1"/>
</dbReference>
<dbReference type="PROSITE" id="PS01281">
    <property type="entry name" value="GIDA_2"/>
    <property type="match status" value="1"/>
</dbReference>
<comment type="function">
    <text evidence="1">NAD-binding protein involved in the addition of a carboxymethylaminomethyl (cmnm) group at the wobble position (U34) of certain tRNAs, forming tRNA-cmnm(5)s(2)U34.</text>
</comment>
<comment type="cofactor">
    <cofactor evidence="1">
        <name>FAD</name>
        <dbReference type="ChEBI" id="CHEBI:57692"/>
    </cofactor>
</comment>
<comment type="subunit">
    <text evidence="1">Homodimer. Heterotetramer of two MnmE and two MnmG subunits.</text>
</comment>
<comment type="subcellular location">
    <subcellularLocation>
        <location evidence="1">Cytoplasm</location>
    </subcellularLocation>
</comment>
<comment type="similarity">
    <text evidence="1">Belongs to the MnmG family.</text>
</comment>
<reference key="1">
    <citation type="journal article" date="2001" name="Science">
        <title>Comparative genomics of Listeria species.</title>
        <authorList>
            <person name="Glaser P."/>
            <person name="Frangeul L."/>
            <person name="Buchrieser C."/>
            <person name="Rusniok C."/>
            <person name="Amend A."/>
            <person name="Baquero F."/>
            <person name="Berche P."/>
            <person name="Bloecker H."/>
            <person name="Brandt P."/>
            <person name="Chakraborty T."/>
            <person name="Charbit A."/>
            <person name="Chetouani F."/>
            <person name="Couve E."/>
            <person name="de Daruvar A."/>
            <person name="Dehoux P."/>
            <person name="Domann E."/>
            <person name="Dominguez-Bernal G."/>
            <person name="Duchaud E."/>
            <person name="Durant L."/>
            <person name="Dussurget O."/>
            <person name="Entian K.-D."/>
            <person name="Fsihi H."/>
            <person name="Garcia-del Portillo F."/>
            <person name="Garrido P."/>
            <person name="Gautier L."/>
            <person name="Goebel W."/>
            <person name="Gomez-Lopez N."/>
            <person name="Hain T."/>
            <person name="Hauf J."/>
            <person name="Jackson D."/>
            <person name="Jones L.-M."/>
            <person name="Kaerst U."/>
            <person name="Kreft J."/>
            <person name="Kuhn M."/>
            <person name="Kunst F."/>
            <person name="Kurapkat G."/>
            <person name="Madueno E."/>
            <person name="Maitournam A."/>
            <person name="Mata Vicente J."/>
            <person name="Ng E."/>
            <person name="Nedjari H."/>
            <person name="Nordsiek G."/>
            <person name="Novella S."/>
            <person name="de Pablos B."/>
            <person name="Perez-Diaz J.-C."/>
            <person name="Purcell R."/>
            <person name="Remmel B."/>
            <person name="Rose M."/>
            <person name="Schlueter T."/>
            <person name="Simoes N."/>
            <person name="Tierrez A."/>
            <person name="Vazquez-Boland J.-A."/>
            <person name="Voss H."/>
            <person name="Wehland J."/>
            <person name="Cossart P."/>
        </authorList>
    </citation>
    <scope>NUCLEOTIDE SEQUENCE [LARGE SCALE GENOMIC DNA]</scope>
    <source>
        <strain>ATCC BAA-680 / CLIP 11262</strain>
    </source>
</reference>
<accession>Q926U8</accession>